<reference key="1">
    <citation type="journal article" date="2005" name="J. Bacteriol.">
        <title>Insights into genome plasticity and pathogenicity of the plant pathogenic Bacterium Xanthomonas campestris pv. vesicatoria revealed by the complete genome sequence.</title>
        <authorList>
            <person name="Thieme F."/>
            <person name="Koebnik R."/>
            <person name="Bekel T."/>
            <person name="Berger C."/>
            <person name="Boch J."/>
            <person name="Buettner D."/>
            <person name="Caldana C."/>
            <person name="Gaigalat L."/>
            <person name="Goesmann A."/>
            <person name="Kay S."/>
            <person name="Kirchner O."/>
            <person name="Lanz C."/>
            <person name="Linke B."/>
            <person name="McHardy A.C."/>
            <person name="Meyer F."/>
            <person name="Mittenhuber G."/>
            <person name="Nies D.H."/>
            <person name="Niesbach-Kloesgen U."/>
            <person name="Patschkowski T."/>
            <person name="Rueckert C."/>
            <person name="Rupp O."/>
            <person name="Schneiker S."/>
            <person name="Schuster S.C."/>
            <person name="Vorhoelter F.J."/>
            <person name="Weber E."/>
            <person name="Puehler A."/>
            <person name="Bonas U."/>
            <person name="Bartels D."/>
            <person name="Kaiser O."/>
        </authorList>
    </citation>
    <scope>NUCLEOTIDE SEQUENCE [LARGE SCALE GENOMIC DNA]</scope>
    <source>
        <strain>85-10</strain>
    </source>
</reference>
<sequence>MALNLSQKQEVVAELADIAAKAHSLIAAEYAGTTVSQMTAMRKQARETGVFLKVVKNTLAARAVEGTDFAVAADKLVGPLLYAFSMEEPGAAGRLIKEFAKSNDKLQAKVVSIGGELFPAGHVDVLASLPTRDQALAMLARVLSEPAAMFARAVKAVGDKQGGGDEAAAPVAETAEA</sequence>
<dbReference type="EMBL" id="AM039952">
    <property type="protein sequence ID" value="CAJ22620.1"/>
    <property type="molecule type" value="Genomic_DNA"/>
</dbReference>
<dbReference type="RefSeq" id="WP_005930748.1">
    <property type="nucleotide sequence ID" value="NZ_CP017190.1"/>
</dbReference>
<dbReference type="SMR" id="Q3BWZ3"/>
<dbReference type="STRING" id="456327.BJD11_17790"/>
<dbReference type="GeneID" id="97509326"/>
<dbReference type="KEGG" id="xcv:XCV0989"/>
<dbReference type="eggNOG" id="COG0244">
    <property type="taxonomic scope" value="Bacteria"/>
</dbReference>
<dbReference type="HOGENOM" id="CLU_092227_0_1_6"/>
<dbReference type="Proteomes" id="UP000007069">
    <property type="component" value="Chromosome"/>
</dbReference>
<dbReference type="GO" id="GO:1990904">
    <property type="term" value="C:ribonucleoprotein complex"/>
    <property type="evidence" value="ECO:0007669"/>
    <property type="project" value="UniProtKB-KW"/>
</dbReference>
<dbReference type="GO" id="GO:0005840">
    <property type="term" value="C:ribosome"/>
    <property type="evidence" value="ECO:0007669"/>
    <property type="project" value="UniProtKB-KW"/>
</dbReference>
<dbReference type="GO" id="GO:0070180">
    <property type="term" value="F:large ribosomal subunit rRNA binding"/>
    <property type="evidence" value="ECO:0007669"/>
    <property type="project" value="UniProtKB-UniRule"/>
</dbReference>
<dbReference type="GO" id="GO:0006412">
    <property type="term" value="P:translation"/>
    <property type="evidence" value="ECO:0007669"/>
    <property type="project" value="UniProtKB-UniRule"/>
</dbReference>
<dbReference type="CDD" id="cd05797">
    <property type="entry name" value="Ribosomal_L10"/>
    <property type="match status" value="1"/>
</dbReference>
<dbReference type="FunFam" id="3.30.70.1730:FF:000001">
    <property type="entry name" value="50S ribosomal protein L10"/>
    <property type="match status" value="1"/>
</dbReference>
<dbReference type="Gene3D" id="3.30.70.1730">
    <property type="match status" value="1"/>
</dbReference>
<dbReference type="HAMAP" id="MF_00362">
    <property type="entry name" value="Ribosomal_uL10"/>
    <property type="match status" value="1"/>
</dbReference>
<dbReference type="InterPro" id="IPR001790">
    <property type="entry name" value="Ribosomal_uL10"/>
</dbReference>
<dbReference type="InterPro" id="IPR043141">
    <property type="entry name" value="Ribosomal_uL10-like_sf"/>
</dbReference>
<dbReference type="InterPro" id="IPR022973">
    <property type="entry name" value="Ribosomal_uL10_bac"/>
</dbReference>
<dbReference type="InterPro" id="IPR047865">
    <property type="entry name" value="Ribosomal_uL10_bac_type"/>
</dbReference>
<dbReference type="NCBIfam" id="NF000955">
    <property type="entry name" value="PRK00099.1-1"/>
    <property type="match status" value="1"/>
</dbReference>
<dbReference type="PANTHER" id="PTHR11560">
    <property type="entry name" value="39S RIBOSOMAL PROTEIN L10, MITOCHONDRIAL"/>
    <property type="match status" value="1"/>
</dbReference>
<dbReference type="Pfam" id="PF00466">
    <property type="entry name" value="Ribosomal_L10"/>
    <property type="match status" value="1"/>
</dbReference>
<dbReference type="SUPFAM" id="SSF160369">
    <property type="entry name" value="Ribosomal protein L10-like"/>
    <property type="match status" value="1"/>
</dbReference>
<keyword id="KW-0687">Ribonucleoprotein</keyword>
<keyword id="KW-0689">Ribosomal protein</keyword>
<keyword id="KW-0694">RNA-binding</keyword>
<keyword id="KW-0699">rRNA-binding</keyword>
<organism>
    <name type="scientific">Xanthomonas euvesicatoria pv. vesicatoria (strain 85-10)</name>
    <name type="common">Xanthomonas campestris pv. vesicatoria</name>
    <dbReference type="NCBI Taxonomy" id="316273"/>
    <lineage>
        <taxon>Bacteria</taxon>
        <taxon>Pseudomonadati</taxon>
        <taxon>Pseudomonadota</taxon>
        <taxon>Gammaproteobacteria</taxon>
        <taxon>Lysobacterales</taxon>
        <taxon>Lysobacteraceae</taxon>
        <taxon>Xanthomonas</taxon>
    </lineage>
</organism>
<protein>
    <recommendedName>
        <fullName evidence="1">Large ribosomal subunit protein uL10</fullName>
    </recommendedName>
    <alternativeName>
        <fullName evidence="2">50S ribosomal protein L10</fullName>
    </alternativeName>
</protein>
<feature type="chain" id="PRO_0000234907" description="Large ribosomal subunit protein uL10">
    <location>
        <begin position="1"/>
        <end position="177"/>
    </location>
</feature>
<comment type="function">
    <text evidence="1">Forms part of the ribosomal stalk, playing a central role in the interaction of the ribosome with GTP-bound translation factors.</text>
</comment>
<comment type="subunit">
    <text evidence="1">Part of the ribosomal stalk of the 50S ribosomal subunit. The N-terminus interacts with L11 and the large rRNA to form the base of the stalk. The C-terminus forms an elongated spine to which L12 dimers bind in a sequential fashion forming a multimeric L10(L12)X complex.</text>
</comment>
<comment type="similarity">
    <text evidence="1">Belongs to the universal ribosomal protein uL10 family.</text>
</comment>
<proteinExistence type="inferred from homology"/>
<accession>Q3BWZ3</accession>
<name>RL10_XANE5</name>
<gene>
    <name evidence="1" type="primary">rplJ</name>
    <name type="ordered locus">XCV0989</name>
</gene>
<evidence type="ECO:0000255" key="1">
    <source>
        <dbReference type="HAMAP-Rule" id="MF_00362"/>
    </source>
</evidence>
<evidence type="ECO:0000305" key="2"/>